<keyword id="KW-0028">Amino-acid biosynthesis</keyword>
<keyword id="KW-0067">ATP-binding</keyword>
<keyword id="KW-0963">Cytoplasm</keyword>
<keyword id="KW-0328">Glycosyltransferase</keyword>
<keyword id="KW-0368">Histidine biosynthesis</keyword>
<keyword id="KW-0547">Nucleotide-binding</keyword>
<keyword id="KW-1185">Reference proteome</keyword>
<keyword id="KW-0808">Transferase</keyword>
<name>HIS1_LACP3</name>
<comment type="function">
    <text evidence="1">Catalyzes the condensation of ATP and 5-phosphoribose 1-diphosphate to form N'-(5'-phosphoribosyl)-ATP (PR-ATP). Has a crucial role in the pathway because the rate of histidine biosynthesis seems to be controlled primarily by regulation of HisG enzymatic activity.</text>
</comment>
<comment type="catalytic activity">
    <reaction evidence="1">
        <text>1-(5-phospho-beta-D-ribosyl)-ATP + diphosphate = 5-phospho-alpha-D-ribose 1-diphosphate + ATP</text>
        <dbReference type="Rhea" id="RHEA:18473"/>
        <dbReference type="ChEBI" id="CHEBI:30616"/>
        <dbReference type="ChEBI" id="CHEBI:33019"/>
        <dbReference type="ChEBI" id="CHEBI:58017"/>
        <dbReference type="ChEBI" id="CHEBI:73183"/>
        <dbReference type="EC" id="2.4.2.17"/>
    </reaction>
</comment>
<comment type="pathway">
    <text evidence="1">Amino-acid biosynthesis; L-histidine biosynthesis; L-histidine from 5-phospho-alpha-D-ribose 1-diphosphate: step 1/9.</text>
</comment>
<comment type="subunit">
    <text evidence="1">Heteromultimer composed of HisG and HisZ subunits.</text>
</comment>
<comment type="subcellular location">
    <subcellularLocation>
        <location evidence="1">Cytoplasm</location>
    </subcellularLocation>
</comment>
<comment type="domain">
    <text>Lacks the C-terminal regulatory region which is replaced by HisZ.</text>
</comment>
<comment type="similarity">
    <text evidence="1">Belongs to the ATP phosphoribosyltransferase family. Short subfamily.</text>
</comment>
<feature type="chain" id="PRO_0000319525" description="ATP phosphoribosyltransferase">
    <location>
        <begin position="1"/>
        <end position="211"/>
    </location>
</feature>
<organism>
    <name type="scientific">Lacticaseibacillus paracasei (strain ATCC 334 / BCRC 17002 / CCUG 31169 / CIP 107868 / KCTC 3260 / NRRL B-441)</name>
    <name type="common">Lactobacillus paracasei</name>
    <dbReference type="NCBI Taxonomy" id="321967"/>
    <lineage>
        <taxon>Bacteria</taxon>
        <taxon>Bacillati</taxon>
        <taxon>Bacillota</taxon>
        <taxon>Bacilli</taxon>
        <taxon>Lactobacillales</taxon>
        <taxon>Lactobacillaceae</taxon>
        <taxon>Lacticaseibacillus</taxon>
    </lineage>
</organism>
<protein>
    <recommendedName>
        <fullName evidence="1">ATP phosphoribosyltransferase</fullName>
        <shortName evidence="1">ATP-PRT</shortName>
        <shortName evidence="1">ATP-PRTase</shortName>
        <ecNumber evidence="1">2.4.2.17</ecNumber>
    </recommendedName>
</protein>
<gene>
    <name evidence="1" type="primary">hisG</name>
    <name type="ordered locus">LSEI_1434</name>
</gene>
<sequence length="211" mass="23474">MTLTIALTKGRTETQVLPLLAAAGIHCEAIQAKSRRLIFADDPSFHFILVKAPEVLTYLNHGTVDIGIVGSDILAEQGHRQFDMLDLNTGRCRFILASTADFDPKQTKRKLIATKYPHIAQQYFQKQGEDVEIIKIEGSVELAPLTGMADAIVDITETGTTLRENHLKVFAELASVSTHLVVNRLALKQKRTEIYQLIQSLQKVRPQEASL</sequence>
<dbReference type="EC" id="2.4.2.17" evidence="1"/>
<dbReference type="EMBL" id="CP000423">
    <property type="protein sequence ID" value="ABJ70212.1"/>
    <property type="molecule type" value="Genomic_DNA"/>
</dbReference>
<dbReference type="RefSeq" id="WP_011674506.1">
    <property type="nucleotide sequence ID" value="NC_008526.1"/>
</dbReference>
<dbReference type="RefSeq" id="YP_806654.1">
    <property type="nucleotide sequence ID" value="NC_008526.1"/>
</dbReference>
<dbReference type="SMR" id="Q039B0"/>
<dbReference type="STRING" id="321967.LSEI_1434"/>
<dbReference type="PaxDb" id="321967-LSEI_1434"/>
<dbReference type="KEGG" id="lca:LSEI_1434"/>
<dbReference type="PATRIC" id="fig|321967.11.peg.1414"/>
<dbReference type="HOGENOM" id="CLU_038115_2_0_9"/>
<dbReference type="UniPathway" id="UPA00031">
    <property type="reaction ID" value="UER00006"/>
</dbReference>
<dbReference type="Proteomes" id="UP000001651">
    <property type="component" value="Chromosome"/>
</dbReference>
<dbReference type="GO" id="GO:0005737">
    <property type="term" value="C:cytoplasm"/>
    <property type="evidence" value="ECO:0007669"/>
    <property type="project" value="UniProtKB-SubCell"/>
</dbReference>
<dbReference type="GO" id="GO:0005524">
    <property type="term" value="F:ATP binding"/>
    <property type="evidence" value="ECO:0007669"/>
    <property type="project" value="UniProtKB-KW"/>
</dbReference>
<dbReference type="GO" id="GO:0003879">
    <property type="term" value="F:ATP phosphoribosyltransferase activity"/>
    <property type="evidence" value="ECO:0007669"/>
    <property type="project" value="UniProtKB-UniRule"/>
</dbReference>
<dbReference type="GO" id="GO:0000105">
    <property type="term" value="P:L-histidine biosynthetic process"/>
    <property type="evidence" value="ECO:0007669"/>
    <property type="project" value="UniProtKB-UniRule"/>
</dbReference>
<dbReference type="CDD" id="cd13595">
    <property type="entry name" value="PBP2_HisGs"/>
    <property type="match status" value="1"/>
</dbReference>
<dbReference type="FunFam" id="3.40.190.10:FF:000008">
    <property type="entry name" value="ATP phosphoribosyltransferase"/>
    <property type="match status" value="1"/>
</dbReference>
<dbReference type="Gene3D" id="3.40.190.10">
    <property type="entry name" value="Periplasmic binding protein-like II"/>
    <property type="match status" value="2"/>
</dbReference>
<dbReference type="HAMAP" id="MF_01018">
    <property type="entry name" value="HisG_Short"/>
    <property type="match status" value="1"/>
</dbReference>
<dbReference type="InterPro" id="IPR013820">
    <property type="entry name" value="ATP_PRibTrfase_cat"/>
</dbReference>
<dbReference type="InterPro" id="IPR018198">
    <property type="entry name" value="ATP_PRibTrfase_CS"/>
</dbReference>
<dbReference type="InterPro" id="IPR001348">
    <property type="entry name" value="ATP_PRibTrfase_HisG"/>
</dbReference>
<dbReference type="InterPro" id="IPR024893">
    <property type="entry name" value="ATP_PRibTrfase_HisG_short"/>
</dbReference>
<dbReference type="NCBIfam" id="TIGR00070">
    <property type="entry name" value="hisG"/>
    <property type="match status" value="1"/>
</dbReference>
<dbReference type="PANTHER" id="PTHR21403:SF8">
    <property type="entry name" value="ATP PHOSPHORIBOSYLTRANSFERASE"/>
    <property type="match status" value="1"/>
</dbReference>
<dbReference type="PANTHER" id="PTHR21403">
    <property type="entry name" value="ATP PHOSPHORIBOSYLTRANSFERASE ATP-PRTASE"/>
    <property type="match status" value="1"/>
</dbReference>
<dbReference type="Pfam" id="PF01634">
    <property type="entry name" value="HisG"/>
    <property type="match status" value="1"/>
</dbReference>
<dbReference type="SUPFAM" id="SSF53850">
    <property type="entry name" value="Periplasmic binding protein-like II"/>
    <property type="match status" value="1"/>
</dbReference>
<dbReference type="PROSITE" id="PS01316">
    <property type="entry name" value="ATP_P_PHORIBOSYLTR"/>
    <property type="match status" value="1"/>
</dbReference>
<reference key="1">
    <citation type="journal article" date="2006" name="Proc. Natl. Acad. Sci. U.S.A.">
        <title>Comparative genomics of the lactic acid bacteria.</title>
        <authorList>
            <person name="Makarova K.S."/>
            <person name="Slesarev A."/>
            <person name="Wolf Y.I."/>
            <person name="Sorokin A."/>
            <person name="Mirkin B."/>
            <person name="Koonin E.V."/>
            <person name="Pavlov A."/>
            <person name="Pavlova N."/>
            <person name="Karamychev V."/>
            <person name="Polouchine N."/>
            <person name="Shakhova V."/>
            <person name="Grigoriev I."/>
            <person name="Lou Y."/>
            <person name="Rohksar D."/>
            <person name="Lucas S."/>
            <person name="Huang K."/>
            <person name="Goodstein D.M."/>
            <person name="Hawkins T."/>
            <person name="Plengvidhya V."/>
            <person name="Welker D."/>
            <person name="Hughes J."/>
            <person name="Goh Y."/>
            <person name="Benson A."/>
            <person name="Baldwin K."/>
            <person name="Lee J.-H."/>
            <person name="Diaz-Muniz I."/>
            <person name="Dosti B."/>
            <person name="Smeianov V."/>
            <person name="Wechter W."/>
            <person name="Barabote R."/>
            <person name="Lorca G."/>
            <person name="Altermann E."/>
            <person name="Barrangou R."/>
            <person name="Ganesan B."/>
            <person name="Xie Y."/>
            <person name="Rawsthorne H."/>
            <person name="Tamir D."/>
            <person name="Parker C."/>
            <person name="Breidt F."/>
            <person name="Broadbent J.R."/>
            <person name="Hutkins R."/>
            <person name="O'Sullivan D."/>
            <person name="Steele J."/>
            <person name="Unlu G."/>
            <person name="Saier M.H. Jr."/>
            <person name="Klaenhammer T."/>
            <person name="Richardson P."/>
            <person name="Kozyavkin S."/>
            <person name="Weimer B.C."/>
            <person name="Mills D.A."/>
        </authorList>
    </citation>
    <scope>NUCLEOTIDE SEQUENCE [LARGE SCALE GENOMIC DNA]</scope>
    <source>
        <strain>ATCC 334 / BCRC 17002 / CCUG 31169 / CIP 107868 / KCTC 3260 / NRRL B-441</strain>
    </source>
</reference>
<proteinExistence type="inferred from homology"/>
<accession>Q039B0</accession>
<evidence type="ECO:0000255" key="1">
    <source>
        <dbReference type="HAMAP-Rule" id="MF_01018"/>
    </source>
</evidence>